<name>RLP49_ARATH</name>
<gene>
    <name evidence="3" type="primary">RLP49</name>
    <name evidence="5" type="ordered locus">At4g13900</name>
    <name evidence="6" type="ORF">F18A5.290</name>
</gene>
<accession>Q9SVM3</accession>
<accession>Q8H180</accession>
<sequence>MMYSCRERRMITVKWSLCLIFCLSNSILVFAKHLCLPDQRDSLWGFKNEFHVPSEKWRNNTDCCSWDGVSCDPKTGNVVGLDLAGSDLNGPLRSNSSLFRLQHLQKLYLGCNTSFGSLSYNDGLKGGELLDSIGNLKYLKVLSLRGCNLFGKIPSSLGNLSYLTHLDLSFNDFTGVIPDSMGNLNYLRVLNLGKCNFYGKVPSSLGNLSYLAQLDLSYNDFTREGPDSMGNLNRLTDMLLKLNSLTDIDLGSNQLKGMLPSNMSSLSKLEYFYIGGNSFSGSIPSSLFMIPSLVELDLQRNHFSALEIGNISSQSKLQVLILGGNNFNPDIVDLSIFSPLLSLGYLDVSGINLKISSTVSLPSPIEYLVLSSCNISEFPKFLRNQTKLYSLDISANQIEGQVPEWLWSLPELQSINISHNSFNGFEGPADVIQGGGELYMLDISSNIFQDPFPLLPVDSMNFLFSSNNRFSGEIPKTICELDNLVMLVLSNNNFSGSIPRCFENLHLYVLHLRNNNLSGIFPEEAISDRLQSLDVGHNLFSGELPKSLINCSALEFLYVEDNRISDTFPSWLELLPNFQILVLRSNEFYGPIFSPGDSLSFPRLRIFDISENRFTGVLPSDYFAPWSAMSSVVDRIIQHFFQGYYHNSVVLTNKGLNMELVGSGFTIYKTIDVSGNRLEGDIPESISLLKELIVLNMSNNAFTGHIPPSLSNLSNLQSLDLSQNRLSGSIPGELGELTFLARMNFSYNRLEGPIPQTTQIQTQDSSSFTENPGLCGLPLKKNCGGKEEATKQEQDEEKEEEEQVFSWIAAAIGYVPGVVCGLTIGHILVSHKRDWFMRIVSLFT</sequence>
<proteinExistence type="evidence at transcript level"/>
<comment type="subcellular location">
    <subcellularLocation>
        <location evidence="4">Cell membrane</location>
        <topology evidence="4">Single-pass type I membrane protein</topology>
    </subcellularLocation>
</comment>
<comment type="alternative products">
    <event type="alternative splicing"/>
    <isoform>
        <id>Q9SVM3-1</id>
        <name>1</name>
        <sequence type="displayed"/>
    </isoform>
    <isoform>
        <id>Q9SVM3-2</id>
        <name>2</name>
        <sequence type="described" ref="VSP_059571"/>
    </isoform>
</comment>
<comment type="similarity">
    <text evidence="4">Belongs to the RLP family.</text>
</comment>
<comment type="sequence caution" evidence="4">
    <conflict type="erroneous initiation">
        <sequence resource="EMBL-CDS" id="CAB36854"/>
    </conflict>
    <text>Truncated N-terminus.</text>
</comment>
<comment type="sequence caution" evidence="4">
    <conflict type="erroneous initiation">
        <sequence resource="EMBL-CDS" id="CAB78432"/>
    </conflict>
    <text>Truncated N-terminus.</text>
</comment>
<feature type="signal peptide" evidence="1">
    <location>
        <begin position="1"/>
        <end position="31"/>
    </location>
</feature>
<feature type="chain" id="PRO_5010148786" description="Receptor-like protein 49">
    <location>
        <begin position="32"/>
        <end position="844"/>
    </location>
</feature>
<feature type="topological domain" description="Extracellular" evidence="1">
    <location>
        <begin position="32"/>
        <end position="803"/>
    </location>
</feature>
<feature type="transmembrane region" description="Helical" evidence="1">
    <location>
        <begin position="804"/>
        <end position="824"/>
    </location>
</feature>
<feature type="topological domain" description="Cytoplasmic" evidence="1">
    <location>
        <begin position="825"/>
        <end position="844"/>
    </location>
</feature>
<feature type="repeat" description="LRR 1" evidence="1">
    <location>
        <begin position="102"/>
        <end position="126"/>
    </location>
</feature>
<feature type="repeat" description="LRR 2" evidence="1">
    <location>
        <begin position="136"/>
        <end position="160"/>
    </location>
</feature>
<feature type="repeat" description="LRR 3" evidence="1">
    <location>
        <begin position="161"/>
        <end position="183"/>
    </location>
</feature>
<feature type="repeat" description="LRR 4" evidence="1">
    <location>
        <begin position="185"/>
        <end position="208"/>
    </location>
</feature>
<feature type="repeat" description="LRR 5" evidence="1">
    <location>
        <begin position="209"/>
        <end position="231"/>
    </location>
</feature>
<feature type="repeat" description="LRR 6" evidence="1">
    <location>
        <begin position="242"/>
        <end position="265"/>
    </location>
</feature>
<feature type="repeat" description="LRR 7" evidence="1">
    <location>
        <begin position="266"/>
        <end position="290"/>
    </location>
</feature>
<feature type="repeat" description="LRR 8" evidence="1">
    <location>
        <begin position="292"/>
        <end position="313"/>
    </location>
</feature>
<feature type="repeat" description="LRR 9" evidence="1">
    <location>
        <begin position="315"/>
        <end position="339"/>
    </location>
</feature>
<feature type="repeat" description="LRR 10" evidence="1">
    <location>
        <begin position="345"/>
        <end position="362"/>
    </location>
</feature>
<feature type="repeat" description="LRR 11" evidence="1">
    <location>
        <begin position="363"/>
        <end position="385"/>
    </location>
</feature>
<feature type="repeat" description="LRR 12" evidence="1">
    <location>
        <begin position="386"/>
        <end position="409"/>
    </location>
</feature>
<feature type="repeat" description="LRR 13" evidence="1">
    <location>
        <begin position="410"/>
        <end position="434"/>
    </location>
</feature>
<feature type="repeat" description="LRR 14" evidence="1">
    <location>
        <begin position="436"/>
        <end position="457"/>
    </location>
</feature>
<feature type="repeat" description="LRR 15" evidence="1">
    <location>
        <begin position="458"/>
        <end position="481"/>
    </location>
</feature>
<feature type="repeat" description="LRR 16" evidence="1">
    <location>
        <begin position="482"/>
        <end position="504"/>
    </location>
</feature>
<feature type="repeat" description="LRR 17" evidence="1">
    <location>
        <begin position="506"/>
        <end position="527"/>
    </location>
</feature>
<feature type="repeat" description="LRR 18" evidence="1">
    <location>
        <begin position="528"/>
        <end position="551"/>
    </location>
</feature>
<feature type="repeat" description="LRR 19" evidence="1">
    <location>
        <begin position="553"/>
        <end position="574"/>
    </location>
</feature>
<feature type="repeat" description="LRR 20" evidence="1">
    <location>
        <begin position="575"/>
        <end position="601"/>
    </location>
</feature>
<feature type="repeat" description="LRR 21" evidence="1">
    <location>
        <begin position="602"/>
        <end position="625"/>
    </location>
</feature>
<feature type="repeat" description="LRR 22" evidence="1">
    <location>
        <begin position="665"/>
        <end position="689"/>
    </location>
</feature>
<feature type="repeat" description="LRR 23" evidence="1">
    <location>
        <begin position="690"/>
        <end position="713"/>
    </location>
</feature>
<feature type="repeat" description="LRR 24" evidence="1">
    <location>
        <begin position="714"/>
        <end position="737"/>
    </location>
</feature>
<feature type="repeat" description="LRR 25" evidence="1">
    <location>
        <begin position="739"/>
        <end position="762"/>
    </location>
</feature>
<feature type="glycosylation site" description="N-linked (GlcNAc...) asparagine" evidence="2">
    <location>
        <position position="59"/>
    </location>
</feature>
<feature type="glycosylation site" description="N-linked (GlcNAc...) asparagine" evidence="2">
    <location>
        <position position="95"/>
    </location>
</feature>
<feature type="glycosylation site" description="N-linked (GlcNAc...) asparagine" evidence="2">
    <location>
        <position position="112"/>
    </location>
</feature>
<feature type="glycosylation site" description="N-linked (GlcNAc...) asparagine" evidence="2">
    <location>
        <position position="159"/>
    </location>
</feature>
<feature type="glycosylation site" description="N-linked (GlcNAc...) asparagine" evidence="2">
    <location>
        <position position="207"/>
    </location>
</feature>
<feature type="glycosylation site" description="N-linked (GlcNAc...) asparagine" evidence="2">
    <location>
        <position position="262"/>
    </location>
</feature>
<feature type="glycosylation site" description="N-linked (GlcNAc...) asparagine" evidence="2">
    <location>
        <position position="310"/>
    </location>
</feature>
<feature type="glycosylation site" description="N-linked (GlcNAc...) asparagine" evidence="2">
    <location>
        <position position="374"/>
    </location>
</feature>
<feature type="glycosylation site" description="N-linked (GlcNAc...) asparagine" evidence="2">
    <location>
        <position position="384"/>
    </location>
</feature>
<feature type="glycosylation site" description="N-linked (GlcNAc...) asparagine" evidence="2">
    <location>
        <position position="416"/>
    </location>
</feature>
<feature type="glycosylation site" description="N-linked (GlcNAc...) asparagine" evidence="2">
    <location>
        <position position="493"/>
    </location>
</feature>
<feature type="glycosylation site" description="N-linked (GlcNAc...) asparagine" evidence="2">
    <location>
        <position position="516"/>
    </location>
</feature>
<feature type="glycosylation site" description="N-linked (GlcNAc...) asparagine" evidence="2">
    <location>
        <position position="550"/>
    </location>
</feature>
<feature type="glycosylation site" description="N-linked (GlcNAc...) asparagine" evidence="2">
    <location>
        <position position="696"/>
    </location>
</feature>
<feature type="glycosylation site" description="N-linked (GlcNAc...) asparagine" evidence="2">
    <location>
        <position position="712"/>
    </location>
</feature>
<feature type="glycosylation site" description="N-linked (GlcNAc...) asparagine" evidence="2">
    <location>
        <position position="744"/>
    </location>
</feature>
<feature type="splice variant" id="VSP_059571" description="In isoform 2.">
    <location>
        <begin position="257"/>
        <end position="349"/>
    </location>
</feature>
<reference key="1">
    <citation type="journal article" date="1999" name="Nature">
        <title>Sequence and analysis of chromosome 4 of the plant Arabidopsis thaliana.</title>
        <authorList>
            <person name="Mayer K.F.X."/>
            <person name="Schueller C."/>
            <person name="Wambutt R."/>
            <person name="Murphy G."/>
            <person name="Volckaert G."/>
            <person name="Pohl T."/>
            <person name="Duesterhoeft A."/>
            <person name="Stiekema W."/>
            <person name="Entian K.-D."/>
            <person name="Terryn N."/>
            <person name="Harris B."/>
            <person name="Ansorge W."/>
            <person name="Brandt P."/>
            <person name="Grivell L.A."/>
            <person name="Rieger M."/>
            <person name="Weichselgartner M."/>
            <person name="de Simone V."/>
            <person name="Obermaier B."/>
            <person name="Mache R."/>
            <person name="Mueller M."/>
            <person name="Kreis M."/>
            <person name="Delseny M."/>
            <person name="Puigdomenech P."/>
            <person name="Watson M."/>
            <person name="Schmidtheini T."/>
            <person name="Reichert B."/>
            <person name="Portetelle D."/>
            <person name="Perez-Alonso M."/>
            <person name="Boutry M."/>
            <person name="Bancroft I."/>
            <person name="Vos P."/>
            <person name="Hoheisel J."/>
            <person name="Zimmermann W."/>
            <person name="Wedler H."/>
            <person name="Ridley P."/>
            <person name="Langham S.-A."/>
            <person name="McCullagh B."/>
            <person name="Bilham L."/>
            <person name="Robben J."/>
            <person name="van der Schueren J."/>
            <person name="Grymonprez B."/>
            <person name="Chuang Y.-J."/>
            <person name="Vandenbussche F."/>
            <person name="Braeken M."/>
            <person name="Weltjens I."/>
            <person name="Voet M."/>
            <person name="Bastiaens I."/>
            <person name="Aert R."/>
            <person name="Defoor E."/>
            <person name="Weitzenegger T."/>
            <person name="Bothe G."/>
            <person name="Ramsperger U."/>
            <person name="Hilbert H."/>
            <person name="Braun M."/>
            <person name="Holzer E."/>
            <person name="Brandt A."/>
            <person name="Peters S."/>
            <person name="van Staveren M."/>
            <person name="Dirkse W."/>
            <person name="Mooijman P."/>
            <person name="Klein Lankhorst R."/>
            <person name="Rose M."/>
            <person name="Hauf J."/>
            <person name="Koetter P."/>
            <person name="Berneiser S."/>
            <person name="Hempel S."/>
            <person name="Feldpausch M."/>
            <person name="Lamberth S."/>
            <person name="Van den Daele H."/>
            <person name="De Keyser A."/>
            <person name="Buysshaert C."/>
            <person name="Gielen J."/>
            <person name="Villarroel R."/>
            <person name="De Clercq R."/>
            <person name="van Montagu M."/>
            <person name="Rogers J."/>
            <person name="Cronin A."/>
            <person name="Quail M.A."/>
            <person name="Bray-Allen S."/>
            <person name="Clark L."/>
            <person name="Doggett J."/>
            <person name="Hall S."/>
            <person name="Kay M."/>
            <person name="Lennard N."/>
            <person name="McLay K."/>
            <person name="Mayes R."/>
            <person name="Pettett A."/>
            <person name="Rajandream M.A."/>
            <person name="Lyne M."/>
            <person name="Benes V."/>
            <person name="Rechmann S."/>
            <person name="Borkova D."/>
            <person name="Bloecker H."/>
            <person name="Scharfe M."/>
            <person name="Grimm M."/>
            <person name="Loehnert T.-H."/>
            <person name="Dose S."/>
            <person name="de Haan M."/>
            <person name="Maarse A.C."/>
            <person name="Schaefer M."/>
            <person name="Mueller-Auer S."/>
            <person name="Gabel C."/>
            <person name="Fuchs M."/>
            <person name="Fartmann B."/>
            <person name="Granderath K."/>
            <person name="Dauner D."/>
            <person name="Herzl A."/>
            <person name="Neumann S."/>
            <person name="Argiriou A."/>
            <person name="Vitale D."/>
            <person name="Liguori R."/>
            <person name="Piravandi E."/>
            <person name="Massenet O."/>
            <person name="Quigley F."/>
            <person name="Clabauld G."/>
            <person name="Muendlein A."/>
            <person name="Felber R."/>
            <person name="Schnabl S."/>
            <person name="Hiller R."/>
            <person name="Schmidt W."/>
            <person name="Lecharny A."/>
            <person name="Aubourg S."/>
            <person name="Chefdor F."/>
            <person name="Cooke R."/>
            <person name="Berger C."/>
            <person name="Monfort A."/>
            <person name="Casacuberta E."/>
            <person name="Gibbons T."/>
            <person name="Weber N."/>
            <person name="Vandenbol M."/>
            <person name="Bargues M."/>
            <person name="Terol J."/>
            <person name="Torres A."/>
            <person name="Perez-Perez A."/>
            <person name="Purnelle B."/>
            <person name="Bent E."/>
            <person name="Johnson S."/>
            <person name="Tacon D."/>
            <person name="Jesse T."/>
            <person name="Heijnen L."/>
            <person name="Schwarz S."/>
            <person name="Scholler P."/>
            <person name="Heber S."/>
            <person name="Francs P."/>
            <person name="Bielke C."/>
            <person name="Frishman D."/>
            <person name="Haase D."/>
            <person name="Lemcke K."/>
            <person name="Mewes H.-W."/>
            <person name="Stocker S."/>
            <person name="Zaccaria P."/>
            <person name="Bevan M."/>
            <person name="Wilson R.K."/>
            <person name="de la Bastide M."/>
            <person name="Habermann K."/>
            <person name="Parnell L."/>
            <person name="Dedhia N."/>
            <person name="Gnoj L."/>
            <person name="Schutz K."/>
            <person name="Huang E."/>
            <person name="Spiegel L."/>
            <person name="Sekhon M."/>
            <person name="Murray J."/>
            <person name="Sheet P."/>
            <person name="Cordes M."/>
            <person name="Abu-Threideh J."/>
            <person name="Stoneking T."/>
            <person name="Kalicki J."/>
            <person name="Graves T."/>
            <person name="Harmon G."/>
            <person name="Edwards J."/>
            <person name="Latreille P."/>
            <person name="Courtney L."/>
            <person name="Cloud J."/>
            <person name="Abbott A."/>
            <person name="Scott K."/>
            <person name="Johnson D."/>
            <person name="Minx P."/>
            <person name="Bentley D."/>
            <person name="Fulton B."/>
            <person name="Miller N."/>
            <person name="Greco T."/>
            <person name="Kemp K."/>
            <person name="Kramer J."/>
            <person name="Fulton L."/>
            <person name="Mardis E."/>
            <person name="Dante M."/>
            <person name="Pepin K."/>
            <person name="Hillier L.W."/>
            <person name="Nelson J."/>
            <person name="Spieth J."/>
            <person name="Ryan E."/>
            <person name="Andrews S."/>
            <person name="Geisel C."/>
            <person name="Layman D."/>
            <person name="Du H."/>
            <person name="Ali J."/>
            <person name="Berghoff A."/>
            <person name="Jones K."/>
            <person name="Drone K."/>
            <person name="Cotton M."/>
            <person name="Joshu C."/>
            <person name="Antonoiu B."/>
            <person name="Zidanic M."/>
            <person name="Strong C."/>
            <person name="Sun H."/>
            <person name="Lamar B."/>
            <person name="Yordan C."/>
            <person name="Ma P."/>
            <person name="Zhong J."/>
            <person name="Preston R."/>
            <person name="Vil D."/>
            <person name="Shekher M."/>
            <person name="Matero A."/>
            <person name="Shah R."/>
            <person name="Swaby I.K."/>
            <person name="O'Shaughnessy A."/>
            <person name="Rodriguez M."/>
            <person name="Hoffman J."/>
            <person name="Till S."/>
            <person name="Granat S."/>
            <person name="Shohdy N."/>
            <person name="Hasegawa A."/>
            <person name="Hameed A."/>
            <person name="Lodhi M."/>
            <person name="Johnson A."/>
            <person name="Chen E."/>
            <person name="Marra M.A."/>
            <person name="Martienssen R."/>
            <person name="McCombie W.R."/>
        </authorList>
    </citation>
    <scope>NUCLEOTIDE SEQUENCE [LARGE SCALE GENOMIC DNA]</scope>
    <source>
        <strain>cv. Columbia</strain>
    </source>
</reference>
<reference key="2">
    <citation type="journal article" date="2017" name="Plant J.">
        <title>Araport11: a complete reannotation of the Arabidopsis thaliana reference genome.</title>
        <authorList>
            <person name="Cheng C.Y."/>
            <person name="Krishnakumar V."/>
            <person name="Chan A.P."/>
            <person name="Thibaud-Nissen F."/>
            <person name="Schobel S."/>
            <person name="Town C.D."/>
        </authorList>
    </citation>
    <scope>GENOME REANNOTATION</scope>
    <source>
        <strain>cv. Columbia</strain>
    </source>
</reference>
<reference key="3">
    <citation type="journal article" date="2003" name="Science">
        <title>Empirical analysis of transcriptional activity in the Arabidopsis genome.</title>
        <authorList>
            <person name="Yamada K."/>
            <person name="Lim J."/>
            <person name="Dale J.M."/>
            <person name="Chen H."/>
            <person name="Shinn P."/>
            <person name="Palm C.J."/>
            <person name="Southwick A.M."/>
            <person name="Wu H.C."/>
            <person name="Kim C.J."/>
            <person name="Nguyen M."/>
            <person name="Pham P.K."/>
            <person name="Cheuk R.F."/>
            <person name="Karlin-Newmann G."/>
            <person name="Liu S.X."/>
            <person name="Lam B."/>
            <person name="Sakano H."/>
            <person name="Wu T."/>
            <person name="Yu G."/>
            <person name="Miranda M."/>
            <person name="Quach H.L."/>
            <person name="Tripp M."/>
            <person name="Chang C.H."/>
            <person name="Lee J.M."/>
            <person name="Toriumi M.J."/>
            <person name="Chan M.M."/>
            <person name="Tang C.C."/>
            <person name="Onodera C.S."/>
            <person name="Deng J.M."/>
            <person name="Akiyama K."/>
            <person name="Ansari Y."/>
            <person name="Arakawa T."/>
            <person name="Banh J."/>
            <person name="Banno F."/>
            <person name="Bowser L."/>
            <person name="Brooks S.Y."/>
            <person name="Carninci P."/>
            <person name="Chao Q."/>
            <person name="Choy N."/>
            <person name="Enju A."/>
            <person name="Goldsmith A.D."/>
            <person name="Gurjal M."/>
            <person name="Hansen N.F."/>
            <person name="Hayashizaki Y."/>
            <person name="Johnson-Hopson C."/>
            <person name="Hsuan V.W."/>
            <person name="Iida K."/>
            <person name="Karnes M."/>
            <person name="Khan S."/>
            <person name="Koesema E."/>
            <person name="Ishida J."/>
            <person name="Jiang P.X."/>
            <person name="Jones T."/>
            <person name="Kawai J."/>
            <person name="Kamiya A."/>
            <person name="Meyers C."/>
            <person name="Nakajima M."/>
            <person name="Narusaka M."/>
            <person name="Seki M."/>
            <person name="Sakurai T."/>
            <person name="Satou M."/>
            <person name="Tamse R."/>
            <person name="Vaysberg M."/>
            <person name="Wallender E.K."/>
            <person name="Wong C."/>
            <person name="Yamamura Y."/>
            <person name="Yuan S."/>
            <person name="Shinozaki K."/>
            <person name="Davis R.W."/>
            <person name="Theologis A."/>
            <person name="Ecker J.R."/>
        </authorList>
    </citation>
    <scope>NUCLEOTIDE SEQUENCE [LARGE SCALE MRNA] (ISOFORM 2)</scope>
    <source>
        <strain>cv. Columbia</strain>
    </source>
</reference>
<reference key="4">
    <citation type="submission" date="2005-03" db="EMBL/GenBank/DDBJ databases">
        <title>Large-scale analysis of RIKEN Arabidopsis full-length (RAFL) cDNAs.</title>
        <authorList>
            <person name="Totoki Y."/>
            <person name="Seki M."/>
            <person name="Ishida J."/>
            <person name="Nakajima M."/>
            <person name="Enju A."/>
            <person name="Kamiya A."/>
            <person name="Narusaka M."/>
            <person name="Shin-i T."/>
            <person name="Nakagawa M."/>
            <person name="Sakamoto N."/>
            <person name="Oishi K."/>
            <person name="Kohara Y."/>
            <person name="Kobayashi M."/>
            <person name="Toyoda A."/>
            <person name="Sakaki Y."/>
            <person name="Sakurai T."/>
            <person name="Iida K."/>
            <person name="Akiyama K."/>
            <person name="Satou M."/>
            <person name="Toyoda T."/>
            <person name="Konagaya A."/>
            <person name="Carninci P."/>
            <person name="Kawai J."/>
            <person name="Hayashizaki Y."/>
            <person name="Shinozaki K."/>
        </authorList>
    </citation>
    <scope>NUCLEOTIDE SEQUENCE [LARGE SCALE MRNA] (ISOFORM 2)</scope>
    <source>
        <strain>cv. Columbia</strain>
    </source>
</reference>
<reference key="5">
    <citation type="journal article" date="2005" name="Plant Physiol.">
        <title>Phylogenomic analysis of the receptor-like proteins of rice and Arabidopsis.</title>
        <authorList>
            <person name="Fritz-Laylin L.K."/>
            <person name="Krishnamurthy N."/>
            <person name="Toer M."/>
            <person name="Sjoelander K.V."/>
            <person name="Jones J.D."/>
        </authorList>
    </citation>
    <scope>GENE FAMILY</scope>
</reference>
<reference key="6">
    <citation type="journal article" date="2008" name="Plant Physiol.">
        <title>A genome-wide functional investigation into the roles of receptor-like proteins in Arabidopsis.</title>
        <authorList>
            <person name="Wang G."/>
            <person name="Ellendorff U."/>
            <person name="Kemp B."/>
            <person name="Mansfield J.W."/>
            <person name="Forsyth A."/>
            <person name="Mitchell K."/>
            <person name="Bastas K."/>
            <person name="Liu C.-M."/>
            <person name="Woods-Toer A."/>
            <person name="Zipfel C."/>
            <person name="de Wit P.J.G.M."/>
            <person name="Jones J.D.G."/>
            <person name="Toer M."/>
            <person name="Thomma B.P.H.J."/>
        </authorList>
    </citation>
    <scope>GENE FAMILY</scope>
    <scope>NOMENCLATURE</scope>
    <source>
        <strain>cv. Columbia</strain>
    </source>
</reference>
<keyword id="KW-0025">Alternative splicing</keyword>
<keyword id="KW-1003">Cell membrane</keyword>
<keyword id="KW-0325">Glycoprotein</keyword>
<keyword id="KW-0433">Leucine-rich repeat</keyword>
<keyword id="KW-0472">Membrane</keyword>
<keyword id="KW-0675">Receptor</keyword>
<keyword id="KW-1185">Reference proteome</keyword>
<keyword id="KW-0677">Repeat</keyword>
<keyword id="KW-0732">Signal</keyword>
<keyword id="KW-0812">Transmembrane</keyword>
<keyword id="KW-1133">Transmembrane helix</keyword>
<protein>
    <recommendedName>
        <fullName evidence="3">Receptor-like protein 49</fullName>
        <shortName evidence="3">AtRLP49</shortName>
    </recommendedName>
</protein>
<evidence type="ECO:0000255" key="1"/>
<evidence type="ECO:0000255" key="2">
    <source>
        <dbReference type="PROSITE-ProRule" id="PRU00498"/>
    </source>
</evidence>
<evidence type="ECO:0000303" key="3">
    <source>
    </source>
</evidence>
<evidence type="ECO:0000305" key="4"/>
<evidence type="ECO:0000312" key="5">
    <source>
        <dbReference type="Araport" id="AT4G13900"/>
    </source>
</evidence>
<evidence type="ECO:0000312" key="6">
    <source>
        <dbReference type="EMBL" id="CAB36854.1"/>
    </source>
</evidence>
<dbReference type="EMBL" id="AL035528">
    <property type="protein sequence ID" value="CAB36854.1"/>
    <property type="status" value="ALT_INIT"/>
    <property type="molecule type" value="Genomic_DNA"/>
</dbReference>
<dbReference type="EMBL" id="AL161537">
    <property type="protein sequence ID" value="CAB78432.1"/>
    <property type="status" value="ALT_INIT"/>
    <property type="molecule type" value="Genomic_DNA"/>
</dbReference>
<dbReference type="EMBL" id="CP002687">
    <property type="status" value="NOT_ANNOTATED_CDS"/>
    <property type="molecule type" value="Genomic_DNA"/>
</dbReference>
<dbReference type="EMBL" id="BT000466">
    <property type="protein sequence ID" value="AAN17443.1"/>
    <property type="molecule type" value="mRNA"/>
</dbReference>
<dbReference type="EMBL" id="AK221537">
    <property type="protein sequence ID" value="BAD94878.1"/>
    <property type="molecule type" value="mRNA"/>
</dbReference>
<dbReference type="PIR" id="T05259">
    <property type="entry name" value="T05259"/>
</dbReference>
<dbReference type="SMR" id="Q9SVM3"/>
<dbReference type="STRING" id="3702.Q9SVM3"/>
<dbReference type="GlyCosmos" id="Q9SVM3">
    <property type="glycosylation" value="16 sites, No reported glycans"/>
</dbReference>
<dbReference type="GlyGen" id="Q9SVM3">
    <property type="glycosylation" value="16 sites"/>
</dbReference>
<dbReference type="Araport" id="AT4G13900"/>
<dbReference type="TAIR" id="AT4G13900"/>
<dbReference type="InParanoid" id="Q9SVM3"/>
<dbReference type="PRO" id="PR:Q9SVM3"/>
<dbReference type="Proteomes" id="UP000006548">
    <property type="component" value="Chromosome 4"/>
</dbReference>
<dbReference type="ExpressionAtlas" id="Q9SVM3">
    <property type="expression patterns" value="baseline and differential"/>
</dbReference>
<dbReference type="GO" id="GO:0005886">
    <property type="term" value="C:plasma membrane"/>
    <property type="evidence" value="ECO:0007669"/>
    <property type="project" value="UniProtKB-SubCell"/>
</dbReference>
<dbReference type="FunFam" id="3.80.10.10:FF:000299">
    <property type="entry name" value="Piriformospora indica-insensitive protein 2"/>
    <property type="match status" value="1"/>
</dbReference>
<dbReference type="FunFam" id="3.80.10.10:FF:000213">
    <property type="entry name" value="Tyrosine-sulfated glycopeptide receptor 1"/>
    <property type="match status" value="1"/>
</dbReference>
<dbReference type="Gene3D" id="3.80.10.10">
    <property type="entry name" value="Ribonuclease Inhibitor"/>
    <property type="match status" value="4"/>
</dbReference>
<dbReference type="InterPro" id="IPR001611">
    <property type="entry name" value="Leu-rich_rpt"/>
</dbReference>
<dbReference type="InterPro" id="IPR003591">
    <property type="entry name" value="Leu-rich_rpt_typical-subtyp"/>
</dbReference>
<dbReference type="InterPro" id="IPR032675">
    <property type="entry name" value="LRR_dom_sf"/>
</dbReference>
<dbReference type="InterPro" id="IPR013210">
    <property type="entry name" value="LRR_N_plant-typ"/>
</dbReference>
<dbReference type="InterPro" id="IPR055414">
    <property type="entry name" value="LRR_R13L4/SHOC2-like"/>
</dbReference>
<dbReference type="PANTHER" id="PTHR48065">
    <property type="entry name" value="OS10G0469600 PROTEIN"/>
    <property type="match status" value="1"/>
</dbReference>
<dbReference type="PANTHER" id="PTHR48065:SF32">
    <property type="entry name" value="PROTEIN BRASSINOSTEROID INSENSITIVE 1-LIKE"/>
    <property type="match status" value="1"/>
</dbReference>
<dbReference type="Pfam" id="PF00560">
    <property type="entry name" value="LRR_1"/>
    <property type="match status" value="3"/>
</dbReference>
<dbReference type="Pfam" id="PF23598">
    <property type="entry name" value="LRR_14"/>
    <property type="match status" value="1"/>
</dbReference>
<dbReference type="Pfam" id="PF13855">
    <property type="entry name" value="LRR_8"/>
    <property type="match status" value="2"/>
</dbReference>
<dbReference type="Pfam" id="PF08263">
    <property type="entry name" value="LRRNT_2"/>
    <property type="match status" value="1"/>
</dbReference>
<dbReference type="PRINTS" id="PR00019">
    <property type="entry name" value="LEURICHRPT"/>
</dbReference>
<dbReference type="SMART" id="SM00369">
    <property type="entry name" value="LRR_TYP"/>
    <property type="match status" value="7"/>
</dbReference>
<dbReference type="SUPFAM" id="SSF52058">
    <property type="entry name" value="L domain-like"/>
    <property type="match status" value="2"/>
</dbReference>
<dbReference type="PROSITE" id="PS51450">
    <property type="entry name" value="LRR"/>
    <property type="match status" value="15"/>
</dbReference>
<organism>
    <name type="scientific">Arabidopsis thaliana</name>
    <name type="common">Mouse-ear cress</name>
    <dbReference type="NCBI Taxonomy" id="3702"/>
    <lineage>
        <taxon>Eukaryota</taxon>
        <taxon>Viridiplantae</taxon>
        <taxon>Streptophyta</taxon>
        <taxon>Embryophyta</taxon>
        <taxon>Tracheophyta</taxon>
        <taxon>Spermatophyta</taxon>
        <taxon>Magnoliopsida</taxon>
        <taxon>eudicotyledons</taxon>
        <taxon>Gunneridae</taxon>
        <taxon>Pentapetalae</taxon>
        <taxon>rosids</taxon>
        <taxon>malvids</taxon>
        <taxon>Brassicales</taxon>
        <taxon>Brassicaceae</taxon>
        <taxon>Camelineae</taxon>
        <taxon>Arabidopsis</taxon>
    </lineage>
</organism>